<dbReference type="EC" id="1.4.1.24" evidence="1"/>
<dbReference type="EMBL" id="CP000300">
    <property type="protein sequence ID" value="ABE52879.1"/>
    <property type="status" value="ALT_INIT"/>
    <property type="molecule type" value="Genomic_DNA"/>
</dbReference>
<dbReference type="STRING" id="259564.Mbur_2000"/>
<dbReference type="KEGG" id="mbu:Mbur_2000"/>
<dbReference type="HOGENOM" id="CLU_056379_0_0_2"/>
<dbReference type="Proteomes" id="UP000001979">
    <property type="component" value="Chromosome"/>
</dbReference>
<dbReference type="GO" id="GO:0003856">
    <property type="term" value="F:3-dehydroquinate synthase activity"/>
    <property type="evidence" value="ECO:0007669"/>
    <property type="project" value="InterPro"/>
</dbReference>
<dbReference type="GO" id="GO:0102042">
    <property type="term" value="F:dehydroquinate synthase activity"/>
    <property type="evidence" value="ECO:0007669"/>
    <property type="project" value="UniProtKB-EC"/>
</dbReference>
<dbReference type="GO" id="GO:0051287">
    <property type="term" value="F:NAD binding"/>
    <property type="evidence" value="ECO:0007669"/>
    <property type="project" value="UniProtKB-UniRule"/>
</dbReference>
<dbReference type="GO" id="GO:0008652">
    <property type="term" value="P:amino acid biosynthetic process"/>
    <property type="evidence" value="ECO:0007669"/>
    <property type="project" value="UniProtKB-KW"/>
</dbReference>
<dbReference type="GO" id="GO:0009073">
    <property type="term" value="P:aromatic amino acid family biosynthetic process"/>
    <property type="evidence" value="ECO:0007669"/>
    <property type="project" value="UniProtKB-UniRule"/>
</dbReference>
<dbReference type="HAMAP" id="MF_01244">
    <property type="entry name" value="Arch_DHQ_synthase"/>
    <property type="match status" value="1"/>
</dbReference>
<dbReference type="InterPro" id="IPR002812">
    <property type="entry name" value="DHQ_synth"/>
</dbReference>
<dbReference type="NCBIfam" id="NF002626">
    <property type="entry name" value="PRK02290.1-4"/>
    <property type="match status" value="1"/>
</dbReference>
<dbReference type="PANTHER" id="PTHR33563">
    <property type="match status" value="1"/>
</dbReference>
<dbReference type="PANTHER" id="PTHR33563:SF1">
    <property type="entry name" value="3-DEHYDROQUINATE SYNTHASE"/>
    <property type="match status" value="1"/>
</dbReference>
<dbReference type="Pfam" id="PF01959">
    <property type="entry name" value="DHQS"/>
    <property type="match status" value="1"/>
</dbReference>
<dbReference type="PIRSF" id="PIRSF006655">
    <property type="entry name" value="DHQ_synth"/>
    <property type="match status" value="1"/>
</dbReference>
<name>DHQS_METBU</name>
<protein>
    <recommendedName>
        <fullName evidence="1">3-dehydroquinate synthase</fullName>
        <shortName evidence="1">DHQ synthase</shortName>
        <ecNumber evidence="1">1.4.1.24</ecNumber>
    </recommendedName>
    <alternativeName>
        <fullName evidence="1">3-dehydroquinate synthase II</fullName>
    </alternativeName>
</protein>
<comment type="function">
    <text evidence="1">Catalyzes the oxidative deamination and cyclization of 2-amino-3,7-dideoxy-D-threo-hept-6-ulosonic acid (ADH) to yield 3-dehydroquinate (DHQ), which is fed into the canonical shikimic pathway of aromatic amino acid biosynthesis.</text>
</comment>
<comment type="catalytic activity">
    <reaction evidence="1">
        <text>2-amino-2,3,7-trideoxy-D-lyxo-hept-6-ulosonate + NAD(+) + H2O = 3-dehydroquinate + NH4(+) + NADH + H(+)</text>
        <dbReference type="Rhea" id="RHEA:25956"/>
        <dbReference type="ChEBI" id="CHEBI:15377"/>
        <dbReference type="ChEBI" id="CHEBI:15378"/>
        <dbReference type="ChEBI" id="CHEBI:28938"/>
        <dbReference type="ChEBI" id="CHEBI:32364"/>
        <dbReference type="ChEBI" id="CHEBI:57540"/>
        <dbReference type="ChEBI" id="CHEBI:57945"/>
        <dbReference type="ChEBI" id="CHEBI:58859"/>
        <dbReference type="EC" id="1.4.1.24"/>
    </reaction>
</comment>
<comment type="similarity">
    <text evidence="1">Belongs to the archaeal-type DHQ synthase family.</text>
</comment>
<comment type="sequence caution" evidence="2">
    <conflict type="erroneous initiation">
        <sequence resource="EMBL-CDS" id="ABE52879"/>
    </conflict>
</comment>
<reference key="1">
    <citation type="journal article" date="2009" name="ISME J.">
        <title>The genome sequence of the psychrophilic archaeon, Methanococcoides burtonii: the role of genome evolution in cold adaptation.</title>
        <authorList>
            <person name="Allen M.A."/>
            <person name="Lauro F.M."/>
            <person name="Williams T.J."/>
            <person name="Burg D."/>
            <person name="Siddiqui K.S."/>
            <person name="De Francisci D."/>
            <person name="Chong K.W."/>
            <person name="Pilak O."/>
            <person name="Chew H.H."/>
            <person name="De Maere M.Z."/>
            <person name="Ting L."/>
            <person name="Katrib M."/>
            <person name="Ng C."/>
            <person name="Sowers K.R."/>
            <person name="Galperin M.Y."/>
            <person name="Anderson I.J."/>
            <person name="Ivanova N."/>
            <person name="Dalin E."/>
            <person name="Martinez M."/>
            <person name="Lapidus A."/>
            <person name="Hauser L."/>
            <person name="Land M."/>
            <person name="Thomas T."/>
            <person name="Cavicchioli R."/>
        </authorList>
    </citation>
    <scope>NUCLEOTIDE SEQUENCE [LARGE SCALE GENOMIC DNA]</scope>
    <source>
        <strain>DSM 6242 / NBRC 107633 / OCM 468 / ACE-M</strain>
    </source>
</reference>
<sequence>MDKTIWIKADKGHWEAHKDRITTGLESGANCVLVNSDEVEKVRELGDIQVAAFTYDDKSGADIVVVGKGGEGDGTKPLSPDPVGSLDMITAIRLKEKGLTVGAYVVIQNKKYEEFAAEIGKECDFLIIVGTDWKVIPLENLIAALQDSDVKIIAGVRDQDEAKLALETMEHGSEGVLLDSDDPNTIKATVAVAERSGIEDLKLVPGKVTKVEAVGMGDRVCVDTCNMMTKGEGMLVGSQASGMFLVHSESEESPYVASRPFRVNAGAVHAYVKVGDRTRYLSELSSGDEVTIVNAGGKQRTGIVGRVKIERRPLMLVEAEVNGEIIKNILQNAETIKLVDINGEPISVADLKPGNEVMVYYEGGARHFGMKVEETIIEK</sequence>
<proteinExistence type="inferred from homology"/>
<accession>Q12UJ7</accession>
<evidence type="ECO:0000255" key="1">
    <source>
        <dbReference type="HAMAP-Rule" id="MF_01244"/>
    </source>
</evidence>
<evidence type="ECO:0000305" key="2"/>
<keyword id="KW-0028">Amino-acid biosynthesis</keyword>
<keyword id="KW-0057">Aromatic amino acid biosynthesis</keyword>
<keyword id="KW-0520">NAD</keyword>
<keyword id="KW-0560">Oxidoreductase</keyword>
<feature type="chain" id="PRO_0000372048" description="3-dehydroquinate synthase">
    <location>
        <begin position="1"/>
        <end position="379"/>
    </location>
</feature>
<organism>
    <name type="scientific">Methanococcoides burtonii (strain DSM 6242 / NBRC 107633 / OCM 468 / ACE-M)</name>
    <dbReference type="NCBI Taxonomy" id="259564"/>
    <lineage>
        <taxon>Archaea</taxon>
        <taxon>Methanobacteriati</taxon>
        <taxon>Methanobacteriota</taxon>
        <taxon>Stenosarchaea group</taxon>
        <taxon>Methanomicrobia</taxon>
        <taxon>Methanosarcinales</taxon>
        <taxon>Methanosarcinaceae</taxon>
        <taxon>Methanococcoides</taxon>
    </lineage>
</organism>
<gene>
    <name evidence="1" type="primary">aroB'</name>
    <name type="ordered locus">Mbur_2000</name>
</gene>